<keyword id="KW-0233">DNA recombination</keyword>
<keyword id="KW-0238">DNA-binding</keyword>
<keyword id="KW-0804">Transcription</keyword>
<keyword id="KW-0805">Transcription regulation</keyword>
<keyword id="KW-0810">Translation regulation</keyword>
<sequence length="94" mass="10621">MTKSELIERLATQQSHIPAKAVEDAVKEMLEHMASTLAQGERIEIRGFGSFSLHYRAPRTGRNPKTGDKVELEGKYVPHFKPGKELRDRANIYG</sequence>
<proteinExistence type="inferred from homology"/>
<accession>B5BBP5</accession>
<evidence type="ECO:0000255" key="1">
    <source>
        <dbReference type="HAMAP-Rule" id="MF_00381"/>
    </source>
</evidence>
<name>IHFB_SALPK</name>
<protein>
    <recommendedName>
        <fullName evidence="1">Integration host factor subunit beta</fullName>
        <shortName evidence="1">IHF-beta</shortName>
    </recommendedName>
</protein>
<reference key="1">
    <citation type="journal article" date="2009" name="BMC Genomics">
        <title>Pseudogene accumulation in the evolutionary histories of Salmonella enterica serovars Paratyphi A and Typhi.</title>
        <authorList>
            <person name="Holt K.E."/>
            <person name="Thomson N.R."/>
            <person name="Wain J."/>
            <person name="Langridge G.C."/>
            <person name="Hasan R."/>
            <person name="Bhutta Z.A."/>
            <person name="Quail M.A."/>
            <person name="Norbertczak H."/>
            <person name="Walker D."/>
            <person name="Simmonds M."/>
            <person name="White B."/>
            <person name="Bason N."/>
            <person name="Mungall K."/>
            <person name="Dougan G."/>
            <person name="Parkhill J."/>
        </authorList>
    </citation>
    <scope>NUCLEOTIDE SEQUENCE [LARGE SCALE GENOMIC DNA]</scope>
    <source>
        <strain>AKU_12601</strain>
    </source>
</reference>
<organism>
    <name type="scientific">Salmonella paratyphi A (strain AKU_12601)</name>
    <dbReference type="NCBI Taxonomy" id="554290"/>
    <lineage>
        <taxon>Bacteria</taxon>
        <taxon>Pseudomonadati</taxon>
        <taxon>Pseudomonadota</taxon>
        <taxon>Gammaproteobacteria</taxon>
        <taxon>Enterobacterales</taxon>
        <taxon>Enterobacteriaceae</taxon>
        <taxon>Salmonella</taxon>
    </lineage>
</organism>
<dbReference type="EMBL" id="FM200053">
    <property type="protein sequence ID" value="CAR59881.1"/>
    <property type="molecule type" value="Genomic_DNA"/>
</dbReference>
<dbReference type="RefSeq" id="WP_000167332.1">
    <property type="nucleotide sequence ID" value="NC_011147.1"/>
</dbReference>
<dbReference type="SMR" id="B5BBP5"/>
<dbReference type="GeneID" id="84237116"/>
<dbReference type="KEGG" id="sek:SSPA1688"/>
<dbReference type="HOGENOM" id="CLU_105066_2_0_6"/>
<dbReference type="Proteomes" id="UP000001869">
    <property type="component" value="Chromosome"/>
</dbReference>
<dbReference type="GO" id="GO:0005694">
    <property type="term" value="C:chromosome"/>
    <property type="evidence" value="ECO:0007669"/>
    <property type="project" value="InterPro"/>
</dbReference>
<dbReference type="GO" id="GO:0005829">
    <property type="term" value="C:cytosol"/>
    <property type="evidence" value="ECO:0007669"/>
    <property type="project" value="TreeGrafter"/>
</dbReference>
<dbReference type="GO" id="GO:0003677">
    <property type="term" value="F:DNA binding"/>
    <property type="evidence" value="ECO:0007669"/>
    <property type="project" value="UniProtKB-UniRule"/>
</dbReference>
<dbReference type="GO" id="GO:0030527">
    <property type="term" value="F:structural constituent of chromatin"/>
    <property type="evidence" value="ECO:0007669"/>
    <property type="project" value="InterPro"/>
</dbReference>
<dbReference type="GO" id="GO:0006310">
    <property type="term" value="P:DNA recombination"/>
    <property type="evidence" value="ECO:0007669"/>
    <property type="project" value="UniProtKB-UniRule"/>
</dbReference>
<dbReference type="GO" id="GO:0006355">
    <property type="term" value="P:regulation of DNA-templated transcription"/>
    <property type="evidence" value="ECO:0007669"/>
    <property type="project" value="UniProtKB-UniRule"/>
</dbReference>
<dbReference type="GO" id="GO:0006417">
    <property type="term" value="P:regulation of translation"/>
    <property type="evidence" value="ECO:0007669"/>
    <property type="project" value="UniProtKB-UniRule"/>
</dbReference>
<dbReference type="CDD" id="cd13836">
    <property type="entry name" value="IHF_B"/>
    <property type="match status" value="1"/>
</dbReference>
<dbReference type="FunFam" id="4.10.520.10:FF:000003">
    <property type="entry name" value="Integration host factor subunit beta"/>
    <property type="match status" value="1"/>
</dbReference>
<dbReference type="Gene3D" id="4.10.520.10">
    <property type="entry name" value="IHF-like DNA-binding proteins"/>
    <property type="match status" value="1"/>
</dbReference>
<dbReference type="HAMAP" id="MF_00381">
    <property type="entry name" value="IHF_beta"/>
    <property type="match status" value="1"/>
</dbReference>
<dbReference type="InterPro" id="IPR000119">
    <property type="entry name" value="Hist_DNA-bd"/>
</dbReference>
<dbReference type="InterPro" id="IPR020816">
    <property type="entry name" value="Histone-like_DNA-bd_CS"/>
</dbReference>
<dbReference type="InterPro" id="IPR010992">
    <property type="entry name" value="IHF-like_DNA-bd_dom_sf"/>
</dbReference>
<dbReference type="InterPro" id="IPR005685">
    <property type="entry name" value="IHF_beta"/>
</dbReference>
<dbReference type="NCBIfam" id="TIGR00988">
    <property type="entry name" value="hip"/>
    <property type="match status" value="1"/>
</dbReference>
<dbReference type="NCBIfam" id="NF001222">
    <property type="entry name" value="PRK00199.1"/>
    <property type="match status" value="1"/>
</dbReference>
<dbReference type="PANTHER" id="PTHR33175">
    <property type="entry name" value="DNA-BINDING PROTEIN HU"/>
    <property type="match status" value="1"/>
</dbReference>
<dbReference type="PANTHER" id="PTHR33175:SF5">
    <property type="entry name" value="INTEGRATION HOST FACTOR SUBUNIT BETA"/>
    <property type="match status" value="1"/>
</dbReference>
<dbReference type="Pfam" id="PF00216">
    <property type="entry name" value="Bac_DNA_binding"/>
    <property type="match status" value="1"/>
</dbReference>
<dbReference type="PRINTS" id="PR01727">
    <property type="entry name" value="DNABINDINGHU"/>
</dbReference>
<dbReference type="SMART" id="SM00411">
    <property type="entry name" value="BHL"/>
    <property type="match status" value="1"/>
</dbReference>
<dbReference type="SUPFAM" id="SSF47729">
    <property type="entry name" value="IHF-like DNA-binding proteins"/>
    <property type="match status" value="1"/>
</dbReference>
<dbReference type="PROSITE" id="PS00045">
    <property type="entry name" value="HISTONE_LIKE"/>
    <property type="match status" value="1"/>
</dbReference>
<gene>
    <name evidence="1" type="primary">ihfB</name>
    <name evidence="1" type="synonym">himD</name>
    <name type="ordered locus">SSPA1688</name>
</gene>
<comment type="function">
    <text evidence="1">This protein is one of the two subunits of integration host factor, a specific DNA-binding protein that functions in genetic recombination as well as in transcriptional and translational control.</text>
</comment>
<comment type="subunit">
    <text evidence="1">Heterodimer of an alpha and a beta chain.</text>
</comment>
<comment type="similarity">
    <text evidence="1">Belongs to the bacterial histone-like protein family.</text>
</comment>
<feature type="chain" id="PRO_1000122241" description="Integration host factor subunit beta">
    <location>
        <begin position="1"/>
        <end position="94"/>
    </location>
</feature>